<organism>
    <name type="scientific">Panax ginseng</name>
    <name type="common">Korean ginseng</name>
    <dbReference type="NCBI Taxonomy" id="4054"/>
    <lineage>
        <taxon>Eukaryota</taxon>
        <taxon>Viridiplantae</taxon>
        <taxon>Streptophyta</taxon>
        <taxon>Embryophyta</taxon>
        <taxon>Tracheophyta</taxon>
        <taxon>Spermatophyta</taxon>
        <taxon>Magnoliopsida</taxon>
        <taxon>eudicotyledons</taxon>
        <taxon>Gunneridae</taxon>
        <taxon>Pentapetalae</taxon>
        <taxon>asterids</taxon>
        <taxon>campanulids</taxon>
        <taxon>Apiales</taxon>
        <taxon>Araliaceae</taxon>
        <taxon>Panax</taxon>
    </lineage>
</organism>
<accession>Q68S23</accession>
<reference key="1">
    <citation type="journal article" date="2004" name="DNA Res.">
        <title>Complete chloroplast genome sequence from Korea ginseng (Panax schinseng Nees) and comparative analysis of sequence evolution among 17 vascular plants.</title>
        <authorList>
            <person name="Kim K.-J."/>
            <person name="Lee H.-L."/>
        </authorList>
    </citation>
    <scope>NUCLEOTIDE SEQUENCE [LARGE SCALE GENOMIC DNA]</scope>
</reference>
<gene>
    <name evidence="1" type="primary">psbK</name>
    <name type="ORF">PSC0085</name>
</gene>
<protein>
    <recommendedName>
        <fullName evidence="1">Photosystem II reaction center protein K</fullName>
        <shortName evidence="1">PSII-K</shortName>
    </recommendedName>
</protein>
<sequence length="61" mass="6938">MLNIFSLICICLNSALYSSSLFFAKLPEAYAFLNPIVDLMPVIPLFFFLLAFVWQAAVSFR</sequence>
<feature type="propeptide" id="PRO_0000029503" evidence="1">
    <location>
        <begin position="1"/>
        <end position="24"/>
    </location>
</feature>
<feature type="chain" id="PRO_0000029504" description="Photosystem II reaction center protein K" evidence="1">
    <location>
        <begin position="25"/>
        <end position="61"/>
    </location>
</feature>
<feature type="transmembrane region" description="Helical" evidence="1">
    <location>
        <begin position="40"/>
        <end position="60"/>
    </location>
</feature>
<evidence type="ECO:0000255" key="1">
    <source>
        <dbReference type="HAMAP-Rule" id="MF_00441"/>
    </source>
</evidence>
<name>PSBK_PANGI</name>
<comment type="function">
    <text evidence="1">One of the components of the core complex of photosystem II (PSII). PSII is a light-driven water:plastoquinone oxidoreductase that uses light energy to abstract electrons from H(2)O, generating O(2) and a proton gradient subsequently used for ATP formation. It consists of a core antenna complex that captures photons, and an electron transfer chain that converts photonic excitation into a charge separation.</text>
</comment>
<comment type="subunit">
    <text evidence="1">PSII is composed of 1 copy each of membrane proteins PsbA, PsbB, PsbC, PsbD, PsbE, PsbF, PsbH, PsbI, PsbJ, PsbK, PsbL, PsbM, PsbT, PsbX, PsbY, PsbZ, Psb30/Ycf12, at least 3 peripheral proteins of the oxygen-evolving complex and a large number of cofactors. It forms dimeric complexes.</text>
</comment>
<comment type="subcellular location">
    <subcellularLocation>
        <location evidence="1">Plastid</location>
        <location evidence="1">Chloroplast thylakoid membrane</location>
        <topology evidence="1">Single-pass membrane protein</topology>
    </subcellularLocation>
</comment>
<comment type="similarity">
    <text evidence="1">Belongs to the PsbK family.</text>
</comment>
<geneLocation type="chloroplast"/>
<dbReference type="EMBL" id="AY582139">
    <property type="protein sequence ID" value="AAT98492.1"/>
    <property type="molecule type" value="Genomic_DNA"/>
</dbReference>
<dbReference type="RefSeq" id="YP_086949.1">
    <property type="nucleotide sequence ID" value="NC_006290.1"/>
</dbReference>
<dbReference type="SMR" id="Q68S23"/>
<dbReference type="GeneID" id="3021546"/>
<dbReference type="GO" id="GO:0009535">
    <property type="term" value="C:chloroplast thylakoid membrane"/>
    <property type="evidence" value="ECO:0007669"/>
    <property type="project" value="UniProtKB-SubCell"/>
</dbReference>
<dbReference type="GO" id="GO:0009539">
    <property type="term" value="C:photosystem II reaction center"/>
    <property type="evidence" value="ECO:0007669"/>
    <property type="project" value="InterPro"/>
</dbReference>
<dbReference type="GO" id="GO:0015979">
    <property type="term" value="P:photosynthesis"/>
    <property type="evidence" value="ECO:0007669"/>
    <property type="project" value="UniProtKB-UniRule"/>
</dbReference>
<dbReference type="HAMAP" id="MF_00441">
    <property type="entry name" value="PSII_PsbK"/>
    <property type="match status" value="1"/>
</dbReference>
<dbReference type="InterPro" id="IPR003687">
    <property type="entry name" value="PSII_PsbK"/>
</dbReference>
<dbReference type="InterPro" id="IPR037270">
    <property type="entry name" value="PSII_PsbK_sf"/>
</dbReference>
<dbReference type="NCBIfam" id="NF002715">
    <property type="entry name" value="PRK02553.1"/>
    <property type="match status" value="1"/>
</dbReference>
<dbReference type="PANTHER" id="PTHR35325">
    <property type="match status" value="1"/>
</dbReference>
<dbReference type="PANTHER" id="PTHR35325:SF1">
    <property type="entry name" value="PHOTOSYSTEM II REACTION CENTER PROTEIN K"/>
    <property type="match status" value="1"/>
</dbReference>
<dbReference type="Pfam" id="PF02533">
    <property type="entry name" value="PsbK"/>
    <property type="match status" value="1"/>
</dbReference>
<dbReference type="SUPFAM" id="SSF161037">
    <property type="entry name" value="Photosystem II reaction center protein K, PsbK"/>
    <property type="match status" value="1"/>
</dbReference>
<keyword id="KW-0150">Chloroplast</keyword>
<keyword id="KW-0472">Membrane</keyword>
<keyword id="KW-0602">Photosynthesis</keyword>
<keyword id="KW-0604">Photosystem II</keyword>
<keyword id="KW-0934">Plastid</keyword>
<keyword id="KW-0674">Reaction center</keyword>
<keyword id="KW-0793">Thylakoid</keyword>
<keyword id="KW-0812">Transmembrane</keyword>
<keyword id="KW-1133">Transmembrane helix</keyword>
<proteinExistence type="inferred from homology"/>